<gene>
    <name evidence="1" type="primary">floA</name>
    <name type="ordered locus">BPUM_2271</name>
</gene>
<organism>
    <name type="scientific">Bacillus pumilus (strain SAFR-032)</name>
    <dbReference type="NCBI Taxonomy" id="315750"/>
    <lineage>
        <taxon>Bacteria</taxon>
        <taxon>Bacillati</taxon>
        <taxon>Bacillota</taxon>
        <taxon>Bacilli</taxon>
        <taxon>Bacillales</taxon>
        <taxon>Bacillaceae</taxon>
        <taxon>Bacillus</taxon>
    </lineage>
</organism>
<protein>
    <recommendedName>
        <fullName evidence="1">Flotillin-like protein FloA</fullName>
    </recommendedName>
</protein>
<comment type="function">
    <text evidence="1">Found in functional membrane microdomains (FMM) that may be equivalent to eukaryotic membrane rafts. FMMs are highly dynamic and increase in number as cells age. Flotillins are thought to be important factors in membrane fluidity.</text>
</comment>
<comment type="subunit">
    <text evidence="1">Homooligomerizes.</text>
</comment>
<comment type="subcellular location">
    <subcellularLocation>
        <location evidence="1">Cell membrane</location>
        <topology evidence="1">Multi-pass membrane protein</topology>
    </subcellularLocation>
    <subcellularLocation>
        <location evidence="1">Membrane raft</location>
        <topology evidence="1">Multi-pass membrane protein</topology>
    </subcellularLocation>
</comment>
<comment type="similarity">
    <text evidence="1">Belongs to the flotillin-like FloA family.</text>
</comment>
<proteinExistence type="inferred from homology"/>
<reference key="1">
    <citation type="journal article" date="2007" name="PLoS ONE">
        <title>Paradoxical DNA repair and peroxide resistance gene conservation in Bacillus pumilus SAFR-032.</title>
        <authorList>
            <person name="Gioia J."/>
            <person name="Yerrapragada S."/>
            <person name="Qin X."/>
            <person name="Jiang H."/>
            <person name="Igboeli O.C."/>
            <person name="Muzny D."/>
            <person name="Dugan-Rocha S."/>
            <person name="Ding Y."/>
            <person name="Hawes A."/>
            <person name="Liu W."/>
            <person name="Perez L."/>
            <person name="Kovar C."/>
            <person name="Dinh H."/>
            <person name="Lee S."/>
            <person name="Nazareth L."/>
            <person name="Blyth P."/>
            <person name="Holder M."/>
            <person name="Buhay C."/>
            <person name="Tirumalai M.R."/>
            <person name="Liu Y."/>
            <person name="Dasgupta I."/>
            <person name="Bokhetache L."/>
            <person name="Fujita M."/>
            <person name="Karouia F."/>
            <person name="Eswara Moorthy P."/>
            <person name="Siefert J."/>
            <person name="Uzman A."/>
            <person name="Buzumbo P."/>
            <person name="Verma A."/>
            <person name="Zwiya H."/>
            <person name="McWilliams B.D."/>
            <person name="Olowu A."/>
            <person name="Clinkenbeard K.D."/>
            <person name="Newcombe D."/>
            <person name="Golebiewski L."/>
            <person name="Petrosino J.F."/>
            <person name="Nicholson W.L."/>
            <person name="Fox G.E."/>
            <person name="Venkateswaran K."/>
            <person name="Highlander S.K."/>
            <person name="Weinstock G.M."/>
        </authorList>
    </citation>
    <scope>NUCLEOTIDE SEQUENCE [LARGE SCALE GENOMIC DNA]</scope>
    <source>
        <strain>SAFR-032</strain>
    </source>
</reference>
<name>FLOA_BACP2</name>
<accession>A8FFC3</accession>
<evidence type="ECO:0000255" key="1">
    <source>
        <dbReference type="HAMAP-Rule" id="MF_01562"/>
    </source>
</evidence>
<dbReference type="EMBL" id="CP000813">
    <property type="protein sequence ID" value="ABV62940.1"/>
    <property type="molecule type" value="Genomic_DNA"/>
</dbReference>
<dbReference type="RefSeq" id="WP_012010621.1">
    <property type="nucleotide sequence ID" value="NZ_VEIS01000005.1"/>
</dbReference>
<dbReference type="SMR" id="A8FFC3"/>
<dbReference type="STRING" id="315750.BPUM_2271"/>
<dbReference type="GeneID" id="5621537"/>
<dbReference type="KEGG" id="bpu:BPUM_2271"/>
<dbReference type="eggNOG" id="COG4864">
    <property type="taxonomic scope" value="Bacteria"/>
</dbReference>
<dbReference type="HOGENOM" id="CLU_836378_0_0_9"/>
<dbReference type="OrthoDB" id="9808365at2"/>
<dbReference type="Proteomes" id="UP000001355">
    <property type="component" value="Chromosome"/>
</dbReference>
<dbReference type="GO" id="GO:0045121">
    <property type="term" value="C:membrane raft"/>
    <property type="evidence" value="ECO:0007669"/>
    <property type="project" value="UniProtKB-SubCell"/>
</dbReference>
<dbReference type="GO" id="GO:0005886">
    <property type="term" value="C:plasma membrane"/>
    <property type="evidence" value="ECO:0007669"/>
    <property type="project" value="UniProtKB-SubCell"/>
</dbReference>
<dbReference type="HAMAP" id="MF_01562">
    <property type="entry name" value="FloA"/>
    <property type="match status" value="1"/>
</dbReference>
<dbReference type="InterPro" id="IPR022853">
    <property type="entry name" value="FloA"/>
</dbReference>
<dbReference type="NCBIfam" id="NF010186">
    <property type="entry name" value="PRK13665.1"/>
    <property type="match status" value="1"/>
</dbReference>
<dbReference type="Pfam" id="PF12127">
    <property type="entry name" value="FloA"/>
    <property type="match status" value="1"/>
</dbReference>
<sequence>MDPSTLLLFVIIAAGLIVLSIFFTFVPVMLWISALAAGVRVSIFTLVGMRLRRVIPNRVVNPLIKAHKAGLDVTINQLESHYLAGGNVDRVVNALIAAQRANIELNFARCAAIDLAGRDVLEAVQMSVNPKVIETPFISGVAMDGIEVKAKARITVRANIERLVGGAGEETIIARVGEGIVSTIGSSNNHKRVLENPDMISQTVLGKGLDSGTAFEILSIDIADVDIGKNIGAILQTDQAEADKNIAQAKAEERRAMAVAQEQEMRAKVEEMRAKVVEAEAEVPLAMAEALREGNIGVMDYMNIKNIDADTDMRDSFGKMTKGPSDNENK</sequence>
<feature type="chain" id="PRO_1000069040" description="Flotillin-like protein FloA">
    <location>
        <begin position="1"/>
        <end position="330"/>
    </location>
</feature>
<feature type="transmembrane region" description="Helical" evidence="1">
    <location>
        <begin position="6"/>
        <end position="26"/>
    </location>
</feature>
<feature type="transmembrane region" description="Helical" evidence="1">
    <location>
        <begin position="28"/>
        <end position="48"/>
    </location>
</feature>
<keyword id="KW-1003">Cell membrane</keyword>
<keyword id="KW-0472">Membrane</keyword>
<keyword id="KW-0812">Transmembrane</keyword>
<keyword id="KW-1133">Transmembrane helix</keyword>